<feature type="chain" id="PRO_0000174669" description="Serum amyloid A-5 protein">
    <location>
        <begin position="1"/>
        <end position="102"/>
    </location>
</feature>
<feature type="region of interest" description="Disordered" evidence="2">
    <location>
        <begin position="68"/>
        <end position="102"/>
    </location>
</feature>
<feature type="compositionally biased region" description="Basic and acidic residues" evidence="2">
    <location>
        <begin position="69"/>
        <end position="82"/>
    </location>
</feature>
<organism>
    <name type="scientific">Mesocricetus auratus</name>
    <name type="common">Golden hamster</name>
    <dbReference type="NCBI Taxonomy" id="10036"/>
    <lineage>
        <taxon>Eukaryota</taxon>
        <taxon>Metazoa</taxon>
        <taxon>Chordata</taxon>
        <taxon>Craniata</taxon>
        <taxon>Vertebrata</taxon>
        <taxon>Euteleostomi</taxon>
        <taxon>Mammalia</taxon>
        <taxon>Eutheria</taxon>
        <taxon>Euarchontoglires</taxon>
        <taxon>Glires</taxon>
        <taxon>Rodentia</taxon>
        <taxon>Myomorpha</taxon>
        <taxon>Muroidea</taxon>
        <taxon>Cricetidae</taxon>
        <taxon>Cricetinae</taxon>
        <taxon>Mesocricetus</taxon>
    </lineage>
</organism>
<name>SAA5_MESAU</name>
<protein>
    <recommendedName>
        <fullName>Serum amyloid A-5 protein</fullName>
    </recommendedName>
</protein>
<comment type="function">
    <text>Major acute phase reactant. Apolipoprotein of the HDL complex.</text>
</comment>
<comment type="subcellular location">
    <subcellularLocation>
        <location evidence="1">Secreted</location>
    </subcellularLocation>
</comment>
<comment type="tissue specificity">
    <text>Expressed by the liver; secreted in plasma.</text>
</comment>
<comment type="induction">
    <text>Upon cytokine stimulation.</text>
</comment>
<comment type="disease">
    <text>Reactive, secondary amyloidosis is characterized by the extracellular accumulation in various tissues of the SAA protein. These deposits are highly insoluble and resistant to proteolysis; they disrupt tissue structure and compromise function.</text>
</comment>
<comment type="similarity">
    <text evidence="3">Belongs to the SAA family.</text>
</comment>
<accession>P81491</accession>
<reference key="1">
    <citation type="journal article" date="1993" name="J. Immunol.">
        <title>Syrian and Armenian hamsters differ in serum amyloid A gene expression. Identification of novel Syrian hamster serum amyloid A subtypes.</title>
        <authorList>
            <person name="de Beer M.C."/>
            <person name="de Beer F.C."/>
            <person name="Beach C.M."/>
            <person name="Gonnerman W.A."/>
            <person name="Carreras I."/>
            <person name="Sipe J.D."/>
        </authorList>
    </citation>
    <scope>PROTEIN SEQUENCE</scope>
</reference>
<sequence length="102" mass="11704">WFSFIREAYQGAEDMWRAYSDMKEANWRDSDKYFHARGNYDAAKRGPGGVWAAEVISDAREGIQSLMGRGHEDSMADQEANRWGRSGNDPNHYRPAGLPDKY</sequence>
<keyword id="KW-0011">Acute phase</keyword>
<keyword id="KW-0034">Amyloid</keyword>
<keyword id="KW-0903">Direct protein sequencing</keyword>
<keyword id="KW-0345">HDL</keyword>
<keyword id="KW-1185">Reference proteome</keyword>
<keyword id="KW-0964">Secreted</keyword>
<evidence type="ECO:0000250" key="1"/>
<evidence type="ECO:0000256" key="2">
    <source>
        <dbReference type="SAM" id="MobiDB-lite"/>
    </source>
</evidence>
<evidence type="ECO:0000305" key="3"/>
<proteinExistence type="evidence at protein level"/>
<dbReference type="SMR" id="P81491"/>
<dbReference type="STRING" id="10036.ENSMAUP00000000014"/>
<dbReference type="eggNOG" id="ENOG502S4PB">
    <property type="taxonomic scope" value="Eukaryota"/>
</dbReference>
<dbReference type="Proteomes" id="UP000189706">
    <property type="component" value="Unplaced"/>
</dbReference>
<dbReference type="GO" id="GO:0034364">
    <property type="term" value="C:high-density lipoprotein particle"/>
    <property type="evidence" value="ECO:0007669"/>
    <property type="project" value="UniProtKB-KW"/>
</dbReference>
<dbReference type="GO" id="GO:0006953">
    <property type="term" value="P:acute-phase response"/>
    <property type="evidence" value="ECO:0007669"/>
    <property type="project" value="UniProtKB-KW"/>
</dbReference>
<dbReference type="FunFam" id="1.10.132.110:FF:000001">
    <property type="entry name" value="Serum amyloid A protein"/>
    <property type="match status" value="1"/>
</dbReference>
<dbReference type="Gene3D" id="1.10.132.110">
    <property type="entry name" value="Serum amyloid A protein"/>
    <property type="match status" value="1"/>
</dbReference>
<dbReference type="InterPro" id="IPR000096">
    <property type="entry name" value="Serum_amyloid_A"/>
</dbReference>
<dbReference type="InterPro" id="IPR052464">
    <property type="entry name" value="Synovial_Prolif_Regulator"/>
</dbReference>
<dbReference type="PANTHER" id="PTHR23424">
    <property type="entry name" value="SERUM AMYLOID A"/>
    <property type="match status" value="1"/>
</dbReference>
<dbReference type="PANTHER" id="PTHR23424:SF29">
    <property type="entry name" value="SERUM AMYLOID A PROTEIN"/>
    <property type="match status" value="1"/>
</dbReference>
<dbReference type="Pfam" id="PF00277">
    <property type="entry name" value="SAA"/>
    <property type="match status" value="1"/>
</dbReference>
<dbReference type="PIRSF" id="PIRSF002472">
    <property type="entry name" value="Serum_amyloid_A"/>
    <property type="match status" value="1"/>
</dbReference>
<dbReference type="PRINTS" id="PR00306">
    <property type="entry name" value="SERUMAMYLOID"/>
</dbReference>
<dbReference type="SMART" id="SM00197">
    <property type="entry name" value="SAA"/>
    <property type="match status" value="1"/>
</dbReference>
<dbReference type="PROSITE" id="PS00992">
    <property type="entry name" value="SAA"/>
    <property type="match status" value="1"/>
</dbReference>